<gene>
    <name evidence="1" type="primary">groEL</name>
    <name evidence="1" type="synonym">groL</name>
    <name type="ordered locus">CLM_3732</name>
</gene>
<evidence type="ECO:0000255" key="1">
    <source>
        <dbReference type="HAMAP-Rule" id="MF_00600"/>
    </source>
</evidence>
<proteinExistence type="inferred from homology"/>
<sequence length="541" mass="57922">MAKSLLFGEQARRSMEAGVDKLADTVRVTLGPKGRNVVLDKKFGSPLITNDGVTIAREIELEDPYENMGAQLVKEVATKTNDVAGDGTTTATLLAQAIIREGLKNVTAGANPIQIRTGIRKAVEKAVEEIKVISKPVNGKEDIARVAAISAASEEVGKLIADAMERVGNDGVITVEESKSMGTDLEVVEGMQFDRGYVSAYMVTDTEKMEAVLDDVYILITDKKISNIQEILPILEQIVQQGKKLLIISEDIEGEALSTLVLNKLRGTFTCVGVKAPGFGDRRKEMLQDIAILTGGEVISEELGRDLKDVTIDMLGTADSVKVTKENTTIVNGKGDKVAIKERVSQIRVQIEDTTSEFDKEKLQERLAKLAGGVAVIRVGAATETELKEEKLRIEDALAATKAAVEEGIVPGGGTAYIDIIPKIADLTSDIIDVKLGIDIIRKALEEPVRQIANNAGAEGSVIIEKVKATEAGVGYDALNDKYVDMLKTGIVDPTKVTRSALQNAASIASTFLTTEAAVADIPEKENTPPMAPGMGMDGMY</sequence>
<organism>
    <name type="scientific">Clostridium botulinum (strain Kyoto / Type A2)</name>
    <dbReference type="NCBI Taxonomy" id="536232"/>
    <lineage>
        <taxon>Bacteria</taxon>
        <taxon>Bacillati</taxon>
        <taxon>Bacillota</taxon>
        <taxon>Clostridia</taxon>
        <taxon>Eubacteriales</taxon>
        <taxon>Clostridiaceae</taxon>
        <taxon>Clostridium</taxon>
    </lineage>
</organism>
<accession>C1FLV5</accession>
<feature type="chain" id="PRO_1000147024" description="Chaperonin GroEL">
    <location>
        <begin position="1"/>
        <end position="541"/>
    </location>
</feature>
<feature type="binding site" evidence="1">
    <location>
        <begin position="29"/>
        <end position="32"/>
    </location>
    <ligand>
        <name>ATP</name>
        <dbReference type="ChEBI" id="CHEBI:30616"/>
    </ligand>
</feature>
<feature type="binding site" evidence="1">
    <location>
        <begin position="86"/>
        <end position="90"/>
    </location>
    <ligand>
        <name>ATP</name>
        <dbReference type="ChEBI" id="CHEBI:30616"/>
    </ligand>
</feature>
<feature type="binding site" evidence="1">
    <location>
        <position position="413"/>
    </location>
    <ligand>
        <name>ATP</name>
        <dbReference type="ChEBI" id="CHEBI:30616"/>
    </ligand>
</feature>
<feature type="binding site" evidence="1">
    <location>
        <begin position="477"/>
        <end position="479"/>
    </location>
    <ligand>
        <name>ATP</name>
        <dbReference type="ChEBI" id="CHEBI:30616"/>
    </ligand>
</feature>
<feature type="binding site" evidence="1">
    <location>
        <position position="493"/>
    </location>
    <ligand>
        <name>ATP</name>
        <dbReference type="ChEBI" id="CHEBI:30616"/>
    </ligand>
</feature>
<dbReference type="EC" id="5.6.1.7" evidence="1"/>
<dbReference type="EMBL" id="CP001581">
    <property type="protein sequence ID" value="ACO83878.1"/>
    <property type="molecule type" value="Genomic_DNA"/>
</dbReference>
<dbReference type="RefSeq" id="WP_003357641.1">
    <property type="nucleotide sequence ID" value="NC_012563.1"/>
</dbReference>
<dbReference type="SMR" id="C1FLV5"/>
<dbReference type="GeneID" id="5185850"/>
<dbReference type="KEGG" id="cby:CLM_3732"/>
<dbReference type="eggNOG" id="COG0459">
    <property type="taxonomic scope" value="Bacteria"/>
</dbReference>
<dbReference type="HOGENOM" id="CLU_016503_3_0_9"/>
<dbReference type="Proteomes" id="UP000001374">
    <property type="component" value="Chromosome"/>
</dbReference>
<dbReference type="GO" id="GO:0005737">
    <property type="term" value="C:cytoplasm"/>
    <property type="evidence" value="ECO:0007669"/>
    <property type="project" value="UniProtKB-SubCell"/>
</dbReference>
<dbReference type="GO" id="GO:0005524">
    <property type="term" value="F:ATP binding"/>
    <property type="evidence" value="ECO:0007669"/>
    <property type="project" value="UniProtKB-UniRule"/>
</dbReference>
<dbReference type="GO" id="GO:0140662">
    <property type="term" value="F:ATP-dependent protein folding chaperone"/>
    <property type="evidence" value="ECO:0007669"/>
    <property type="project" value="InterPro"/>
</dbReference>
<dbReference type="GO" id="GO:0016853">
    <property type="term" value="F:isomerase activity"/>
    <property type="evidence" value="ECO:0007669"/>
    <property type="project" value="UniProtKB-KW"/>
</dbReference>
<dbReference type="GO" id="GO:0051082">
    <property type="term" value="F:unfolded protein binding"/>
    <property type="evidence" value="ECO:0007669"/>
    <property type="project" value="UniProtKB-UniRule"/>
</dbReference>
<dbReference type="GO" id="GO:0042026">
    <property type="term" value="P:protein refolding"/>
    <property type="evidence" value="ECO:0007669"/>
    <property type="project" value="UniProtKB-UniRule"/>
</dbReference>
<dbReference type="CDD" id="cd03344">
    <property type="entry name" value="GroEL"/>
    <property type="match status" value="1"/>
</dbReference>
<dbReference type="FunFam" id="3.50.7.10:FF:000001">
    <property type="entry name" value="60 kDa chaperonin"/>
    <property type="match status" value="1"/>
</dbReference>
<dbReference type="Gene3D" id="3.50.7.10">
    <property type="entry name" value="GroEL"/>
    <property type="match status" value="1"/>
</dbReference>
<dbReference type="Gene3D" id="1.10.560.10">
    <property type="entry name" value="GroEL-like equatorial domain"/>
    <property type="match status" value="1"/>
</dbReference>
<dbReference type="Gene3D" id="3.30.260.10">
    <property type="entry name" value="TCP-1-like chaperonin intermediate domain"/>
    <property type="match status" value="1"/>
</dbReference>
<dbReference type="HAMAP" id="MF_00600">
    <property type="entry name" value="CH60"/>
    <property type="match status" value="1"/>
</dbReference>
<dbReference type="InterPro" id="IPR018370">
    <property type="entry name" value="Chaperonin_Cpn60_CS"/>
</dbReference>
<dbReference type="InterPro" id="IPR001844">
    <property type="entry name" value="Cpn60/GroEL"/>
</dbReference>
<dbReference type="InterPro" id="IPR002423">
    <property type="entry name" value="Cpn60/GroEL/TCP-1"/>
</dbReference>
<dbReference type="InterPro" id="IPR027409">
    <property type="entry name" value="GroEL-like_apical_dom_sf"/>
</dbReference>
<dbReference type="InterPro" id="IPR027413">
    <property type="entry name" value="GROEL-like_equatorial_sf"/>
</dbReference>
<dbReference type="InterPro" id="IPR027410">
    <property type="entry name" value="TCP-1-like_intermed_sf"/>
</dbReference>
<dbReference type="NCBIfam" id="TIGR02348">
    <property type="entry name" value="GroEL"/>
    <property type="match status" value="1"/>
</dbReference>
<dbReference type="NCBIfam" id="NF000592">
    <property type="entry name" value="PRK00013.1"/>
    <property type="match status" value="1"/>
</dbReference>
<dbReference type="NCBIfam" id="NF009487">
    <property type="entry name" value="PRK12849.1"/>
    <property type="match status" value="1"/>
</dbReference>
<dbReference type="NCBIfam" id="NF009488">
    <property type="entry name" value="PRK12850.1"/>
    <property type="match status" value="1"/>
</dbReference>
<dbReference type="NCBIfam" id="NF009489">
    <property type="entry name" value="PRK12851.1"/>
    <property type="match status" value="1"/>
</dbReference>
<dbReference type="PANTHER" id="PTHR45633">
    <property type="entry name" value="60 KDA HEAT SHOCK PROTEIN, MITOCHONDRIAL"/>
    <property type="match status" value="1"/>
</dbReference>
<dbReference type="Pfam" id="PF00118">
    <property type="entry name" value="Cpn60_TCP1"/>
    <property type="match status" value="1"/>
</dbReference>
<dbReference type="PRINTS" id="PR00298">
    <property type="entry name" value="CHAPERONIN60"/>
</dbReference>
<dbReference type="SUPFAM" id="SSF52029">
    <property type="entry name" value="GroEL apical domain-like"/>
    <property type="match status" value="1"/>
</dbReference>
<dbReference type="SUPFAM" id="SSF48592">
    <property type="entry name" value="GroEL equatorial domain-like"/>
    <property type="match status" value="1"/>
</dbReference>
<dbReference type="SUPFAM" id="SSF54849">
    <property type="entry name" value="GroEL-intermediate domain like"/>
    <property type="match status" value="1"/>
</dbReference>
<dbReference type="PROSITE" id="PS00296">
    <property type="entry name" value="CHAPERONINS_CPN60"/>
    <property type="match status" value="1"/>
</dbReference>
<reference key="1">
    <citation type="submission" date="2008-10" db="EMBL/GenBank/DDBJ databases">
        <title>Genome sequence of Clostridium botulinum A2 Kyoto.</title>
        <authorList>
            <person name="Shrivastava S."/>
            <person name="Brinkac L.M."/>
            <person name="Brown J.L."/>
            <person name="Bruce D."/>
            <person name="Detter C.C."/>
            <person name="Johnson E.A."/>
            <person name="Munk C.A."/>
            <person name="Smith L.A."/>
            <person name="Smith T.J."/>
            <person name="Sutton G."/>
            <person name="Brettin T.S."/>
        </authorList>
    </citation>
    <scope>NUCLEOTIDE SEQUENCE [LARGE SCALE GENOMIC DNA]</scope>
    <source>
        <strain>Kyoto / Type A2</strain>
    </source>
</reference>
<protein>
    <recommendedName>
        <fullName evidence="1">Chaperonin GroEL</fullName>
        <ecNumber evidence="1">5.6.1.7</ecNumber>
    </recommendedName>
    <alternativeName>
        <fullName evidence="1">60 kDa chaperonin</fullName>
    </alternativeName>
    <alternativeName>
        <fullName evidence="1">Chaperonin-60</fullName>
        <shortName evidence="1">Cpn60</shortName>
    </alternativeName>
</protein>
<keyword id="KW-0067">ATP-binding</keyword>
<keyword id="KW-0143">Chaperone</keyword>
<keyword id="KW-0963">Cytoplasm</keyword>
<keyword id="KW-0413">Isomerase</keyword>
<keyword id="KW-0547">Nucleotide-binding</keyword>
<comment type="function">
    <text evidence="1">Together with its co-chaperonin GroES, plays an essential role in assisting protein folding. The GroEL-GroES system forms a nano-cage that allows encapsulation of the non-native substrate proteins and provides a physical environment optimized to promote and accelerate protein folding.</text>
</comment>
<comment type="catalytic activity">
    <reaction evidence="1">
        <text>ATP + H2O + a folded polypeptide = ADP + phosphate + an unfolded polypeptide.</text>
        <dbReference type="EC" id="5.6.1.7"/>
    </reaction>
</comment>
<comment type="subunit">
    <text evidence="1">Forms a cylinder of 14 subunits composed of two heptameric rings stacked back-to-back. Interacts with the co-chaperonin GroES.</text>
</comment>
<comment type="subcellular location">
    <subcellularLocation>
        <location evidence="1">Cytoplasm</location>
    </subcellularLocation>
</comment>
<comment type="similarity">
    <text evidence="1">Belongs to the chaperonin (HSP60) family.</text>
</comment>
<name>CH60_CLOBJ</name>